<feature type="signal peptide" evidence="2">
    <location>
        <begin position="1"/>
        <end position="21"/>
    </location>
</feature>
<feature type="chain" id="PRO_5000065167" description="Probable phospholipase A2 homolog 1">
    <location>
        <begin position="22"/>
        <end position="138"/>
    </location>
</feature>
<feature type="active site" evidence="3">
    <location>
        <position position="72"/>
    </location>
</feature>
<feature type="binding site" evidence="1">
    <location>
        <position position="48"/>
    </location>
    <ligand>
        <name>Ca(2+)</name>
        <dbReference type="ChEBI" id="CHEBI:29108"/>
    </ligand>
</feature>
<feature type="binding site" evidence="1">
    <location>
        <position position="50"/>
    </location>
    <ligand>
        <name>Ca(2+)</name>
        <dbReference type="ChEBI" id="CHEBI:29108"/>
    </ligand>
</feature>
<feature type="binding site" evidence="1">
    <location>
        <position position="53"/>
    </location>
    <ligand>
        <name>Ca(2+)</name>
        <dbReference type="ChEBI" id="CHEBI:29108"/>
    </ligand>
</feature>
<feature type="binding site" evidence="1">
    <location>
        <position position="73"/>
    </location>
    <ligand>
        <name>Ca(2+)</name>
        <dbReference type="ChEBI" id="CHEBI:29108"/>
    </ligand>
</feature>
<feature type="disulfide bond" evidence="1">
    <location>
        <begin position="29"/>
        <end position="56"/>
    </location>
</feature>
<feature type="disulfide bond" evidence="1">
    <location>
        <begin position="33"/>
        <end position="62"/>
    </location>
</feature>
<feature type="disulfide bond" evidence="1">
    <location>
        <begin position="38"/>
        <end position="109"/>
    </location>
</feature>
<feature type="disulfide bond" evidence="1">
    <location>
        <begin position="49"/>
        <end position="69"/>
    </location>
</feature>
<feature type="disulfide bond" evidence="1">
    <location>
        <begin position="68"/>
        <end position="93"/>
    </location>
</feature>
<feature type="disulfide bond" evidence="1">
    <location>
        <begin position="75"/>
        <end position="86"/>
    </location>
</feature>
<protein>
    <recommendedName>
        <fullName>Probable phospholipase A2 homolog 1</fullName>
        <ecNumber>3.1.1.4</ecNumber>
    </recommendedName>
</protein>
<reference key="1">
    <citation type="journal article" date="1999" name="Plant Mol. Biol.">
        <title>Plant low-molecular-weight phospholipase A2S (PLA2s) are structurally related to the animal secretory PLA2s and are present as a family of isoforms in rice (Oryza sativa).</title>
        <authorList>
            <person name="Staahl U."/>
            <person name="Lee M."/>
            <person name="Sjoedahl S."/>
            <person name="Archer D."/>
            <person name="Cellini F."/>
            <person name="Ek B."/>
            <person name="Iannacone R."/>
            <person name="MacKenzie D."/>
            <person name="Semeraro L."/>
            <person name="Tramontano E."/>
            <person name="Stymme S."/>
        </authorList>
    </citation>
    <scope>NUCLEOTIDE SEQUENCE [MRNA]</scope>
    <source>
        <strain>cv. Nipponbare</strain>
        <tissue>Shoot</tissue>
    </source>
</reference>
<reference key="2">
    <citation type="journal article" date="2005" name="Nature">
        <title>The map-based sequence of the rice genome.</title>
        <authorList>
            <consortium name="International rice genome sequencing project (IRGSP)"/>
        </authorList>
    </citation>
    <scope>NUCLEOTIDE SEQUENCE [LARGE SCALE GENOMIC DNA]</scope>
    <source>
        <strain>cv. Nipponbare</strain>
    </source>
</reference>
<reference key="3">
    <citation type="journal article" date="2008" name="Nucleic Acids Res.">
        <title>The rice annotation project database (RAP-DB): 2008 update.</title>
        <authorList>
            <consortium name="The rice annotation project (RAP)"/>
        </authorList>
    </citation>
    <scope>GENOME REANNOTATION</scope>
    <source>
        <strain>cv. Nipponbare</strain>
    </source>
</reference>
<reference key="4">
    <citation type="journal article" date="2013" name="Rice">
        <title>Improvement of the Oryza sativa Nipponbare reference genome using next generation sequence and optical map data.</title>
        <authorList>
            <person name="Kawahara Y."/>
            <person name="de la Bastide M."/>
            <person name="Hamilton J.P."/>
            <person name="Kanamori H."/>
            <person name="McCombie W.R."/>
            <person name="Ouyang S."/>
            <person name="Schwartz D.C."/>
            <person name="Tanaka T."/>
            <person name="Wu J."/>
            <person name="Zhou S."/>
            <person name="Childs K.L."/>
            <person name="Davidson R.M."/>
            <person name="Lin H."/>
            <person name="Quesada-Ocampo L."/>
            <person name="Vaillancourt B."/>
            <person name="Sakai H."/>
            <person name="Lee S.S."/>
            <person name="Kim J."/>
            <person name="Numa H."/>
            <person name="Itoh T."/>
            <person name="Buell C.R."/>
            <person name="Matsumoto T."/>
        </authorList>
    </citation>
    <scope>GENOME REANNOTATION</scope>
    <source>
        <strain>cv. Nipponbare</strain>
    </source>
</reference>
<reference key="5">
    <citation type="journal article" date="2005" name="PLoS Biol.">
        <title>The genomes of Oryza sativa: a history of duplications.</title>
        <authorList>
            <person name="Yu J."/>
            <person name="Wang J."/>
            <person name="Lin W."/>
            <person name="Li S."/>
            <person name="Li H."/>
            <person name="Zhou J."/>
            <person name="Ni P."/>
            <person name="Dong W."/>
            <person name="Hu S."/>
            <person name="Zeng C."/>
            <person name="Zhang J."/>
            <person name="Zhang Y."/>
            <person name="Li R."/>
            <person name="Xu Z."/>
            <person name="Li S."/>
            <person name="Li X."/>
            <person name="Zheng H."/>
            <person name="Cong L."/>
            <person name="Lin L."/>
            <person name="Yin J."/>
            <person name="Geng J."/>
            <person name="Li G."/>
            <person name="Shi J."/>
            <person name="Liu J."/>
            <person name="Lv H."/>
            <person name="Li J."/>
            <person name="Wang J."/>
            <person name="Deng Y."/>
            <person name="Ran L."/>
            <person name="Shi X."/>
            <person name="Wang X."/>
            <person name="Wu Q."/>
            <person name="Li C."/>
            <person name="Ren X."/>
            <person name="Wang J."/>
            <person name="Wang X."/>
            <person name="Li D."/>
            <person name="Liu D."/>
            <person name="Zhang X."/>
            <person name="Ji Z."/>
            <person name="Zhao W."/>
            <person name="Sun Y."/>
            <person name="Zhang Z."/>
            <person name="Bao J."/>
            <person name="Han Y."/>
            <person name="Dong L."/>
            <person name="Ji J."/>
            <person name="Chen P."/>
            <person name="Wu S."/>
            <person name="Liu J."/>
            <person name="Xiao Y."/>
            <person name="Bu D."/>
            <person name="Tan J."/>
            <person name="Yang L."/>
            <person name="Ye C."/>
            <person name="Zhang J."/>
            <person name="Xu J."/>
            <person name="Zhou Y."/>
            <person name="Yu Y."/>
            <person name="Zhang B."/>
            <person name="Zhuang S."/>
            <person name="Wei H."/>
            <person name="Liu B."/>
            <person name="Lei M."/>
            <person name="Yu H."/>
            <person name="Li Y."/>
            <person name="Xu H."/>
            <person name="Wei S."/>
            <person name="He X."/>
            <person name="Fang L."/>
            <person name="Zhang Z."/>
            <person name="Zhang Y."/>
            <person name="Huang X."/>
            <person name="Su Z."/>
            <person name="Tong W."/>
            <person name="Li J."/>
            <person name="Tong Z."/>
            <person name="Li S."/>
            <person name="Ye J."/>
            <person name="Wang L."/>
            <person name="Fang L."/>
            <person name="Lei T."/>
            <person name="Chen C.-S."/>
            <person name="Chen H.-C."/>
            <person name="Xu Z."/>
            <person name="Li H."/>
            <person name="Huang H."/>
            <person name="Zhang F."/>
            <person name="Xu H."/>
            <person name="Li N."/>
            <person name="Zhao C."/>
            <person name="Li S."/>
            <person name="Dong L."/>
            <person name="Huang Y."/>
            <person name="Li L."/>
            <person name="Xi Y."/>
            <person name="Qi Q."/>
            <person name="Li W."/>
            <person name="Zhang B."/>
            <person name="Hu W."/>
            <person name="Zhang Y."/>
            <person name="Tian X."/>
            <person name="Jiao Y."/>
            <person name="Liang X."/>
            <person name="Jin J."/>
            <person name="Gao L."/>
            <person name="Zheng W."/>
            <person name="Hao B."/>
            <person name="Liu S.-M."/>
            <person name="Wang W."/>
            <person name="Yuan L."/>
            <person name="Cao M."/>
            <person name="McDermott J."/>
            <person name="Samudrala R."/>
            <person name="Wang J."/>
            <person name="Wong G.K.-S."/>
            <person name="Yang H."/>
        </authorList>
    </citation>
    <scope>NUCLEOTIDE SEQUENCE [LARGE SCALE GENOMIC DNA]</scope>
    <source>
        <strain>cv. Nipponbare</strain>
    </source>
</reference>
<gene>
    <name type="primary">PLA2-I</name>
    <name type="ordered locus">Os02g0831700</name>
    <name type="ordered locus">LOC_Os02g58500</name>
    <name type="ORF">OJ1149_C12.15</name>
    <name type="ORF">OsJ_08999</name>
</gene>
<sequence>MPPRSPLLALVFLAAGVLSSATSPPPPPCSRSCAALNCDSVGIRYGKYCGVGWSGCDGEEPCDDLDACCRDHDHCVDKKGLMSVKCHEKFKNCMRKVKKAGKIGFSRKCPYEMAMATMTSGMDMAIMLSQLGTQKLEL</sequence>
<accession>Q9XG80</accession>
<accession>A0A0N7KGE1</accession>
<accession>Q6K970</accession>
<keyword id="KW-0106">Calcium</keyword>
<keyword id="KW-1015">Disulfide bond</keyword>
<keyword id="KW-0378">Hydrolase</keyword>
<keyword id="KW-0442">Lipid degradation</keyword>
<keyword id="KW-0443">Lipid metabolism</keyword>
<keyword id="KW-0479">Metal-binding</keyword>
<keyword id="KW-1185">Reference proteome</keyword>
<keyword id="KW-0964">Secreted</keyword>
<keyword id="KW-0732">Signal</keyword>
<organism>
    <name type="scientific">Oryza sativa subsp. japonica</name>
    <name type="common">Rice</name>
    <dbReference type="NCBI Taxonomy" id="39947"/>
    <lineage>
        <taxon>Eukaryota</taxon>
        <taxon>Viridiplantae</taxon>
        <taxon>Streptophyta</taxon>
        <taxon>Embryophyta</taxon>
        <taxon>Tracheophyta</taxon>
        <taxon>Spermatophyta</taxon>
        <taxon>Magnoliopsida</taxon>
        <taxon>Liliopsida</taxon>
        <taxon>Poales</taxon>
        <taxon>Poaceae</taxon>
        <taxon>BOP clade</taxon>
        <taxon>Oryzoideae</taxon>
        <taxon>Oryzeae</taxon>
        <taxon>Oryzinae</taxon>
        <taxon>Oryza</taxon>
        <taxon>Oryza sativa</taxon>
    </lineage>
</organism>
<comment type="function">
    <text evidence="1">PA2 catalyzes the calcium-dependent hydrolysis of the 2-acyl groups in 3-sn-phosphoglycerides. Releases lysophospholipids (LPLs) and free fatty acids (FFAs) from membrane phospholipids in response to hormones and other external stimuli.</text>
</comment>
<comment type="catalytic activity">
    <reaction evidence="3">
        <text>a 1,2-diacyl-sn-glycero-3-phosphocholine + H2O = a 1-acyl-sn-glycero-3-phosphocholine + a fatty acid + H(+)</text>
        <dbReference type="Rhea" id="RHEA:15801"/>
        <dbReference type="ChEBI" id="CHEBI:15377"/>
        <dbReference type="ChEBI" id="CHEBI:15378"/>
        <dbReference type="ChEBI" id="CHEBI:28868"/>
        <dbReference type="ChEBI" id="CHEBI:57643"/>
        <dbReference type="ChEBI" id="CHEBI:58168"/>
        <dbReference type="EC" id="3.1.1.4"/>
    </reaction>
</comment>
<comment type="cofactor">
    <cofactor evidence="1">
        <name>Ca(2+)</name>
        <dbReference type="ChEBI" id="CHEBI:29108"/>
    </cofactor>
    <text evidence="1">Binds 1 Ca(2+) ion per subunit.</text>
</comment>
<comment type="subcellular location">
    <subcellularLocation>
        <location evidence="4">Secreted</location>
    </subcellularLocation>
</comment>
<comment type="similarity">
    <text evidence="4">Belongs to the phospholipase A2 family.</text>
</comment>
<evidence type="ECO:0000250" key="1"/>
<evidence type="ECO:0000255" key="2"/>
<evidence type="ECO:0000255" key="3">
    <source>
        <dbReference type="PROSITE-ProRule" id="PRU10035"/>
    </source>
</evidence>
<evidence type="ECO:0000305" key="4"/>
<proteinExistence type="evidence at transcript level"/>
<dbReference type="EC" id="3.1.1.4"/>
<dbReference type="EMBL" id="AJ238116">
    <property type="protein sequence ID" value="CAB40841.1"/>
    <property type="molecule type" value="mRNA"/>
</dbReference>
<dbReference type="EMBL" id="AP004082">
    <property type="protein sequence ID" value="BAD23008.1"/>
    <property type="molecule type" value="Genomic_DNA"/>
</dbReference>
<dbReference type="EMBL" id="AP008208">
    <property type="protein sequence ID" value="BAF10536.1"/>
    <property type="molecule type" value="Genomic_DNA"/>
</dbReference>
<dbReference type="EMBL" id="AP014958">
    <property type="protein sequence ID" value="BAS81761.1"/>
    <property type="molecule type" value="Genomic_DNA"/>
</dbReference>
<dbReference type="EMBL" id="CM000139">
    <property type="protein sequence ID" value="EEE58114.1"/>
    <property type="molecule type" value="Genomic_DNA"/>
</dbReference>
<dbReference type="SMR" id="Q9XG80"/>
<dbReference type="FunCoup" id="Q9XG80">
    <property type="interactions" value="356"/>
</dbReference>
<dbReference type="STRING" id="39947.Q9XG80"/>
<dbReference type="PaxDb" id="39947-Q9XG80"/>
<dbReference type="EnsemblPlants" id="Os02t0831700-01">
    <property type="protein sequence ID" value="Os02t0831700-01"/>
    <property type="gene ID" value="Os02g0831700"/>
</dbReference>
<dbReference type="Gramene" id="Os02t0831700-01">
    <property type="protein sequence ID" value="Os02t0831700-01"/>
    <property type="gene ID" value="Os02g0831700"/>
</dbReference>
<dbReference type="KEGG" id="dosa:Os02g0831700"/>
<dbReference type="eggNOG" id="ENOG502RZIE">
    <property type="taxonomic scope" value="Eukaryota"/>
</dbReference>
<dbReference type="HOGENOM" id="CLU_115623_1_0_1"/>
<dbReference type="InParanoid" id="Q9XG80"/>
<dbReference type="OMA" id="CVAQNCN"/>
<dbReference type="PlantReactome" id="R-OSA-1119332">
    <property type="pathway name" value="Jasmonic acid biosynthesis"/>
</dbReference>
<dbReference type="Proteomes" id="UP000000763">
    <property type="component" value="Chromosome 2"/>
</dbReference>
<dbReference type="Proteomes" id="UP000007752">
    <property type="component" value="Chromosome 2"/>
</dbReference>
<dbReference type="Proteomes" id="UP000059680">
    <property type="component" value="Chromosome 2"/>
</dbReference>
<dbReference type="GO" id="GO:0005576">
    <property type="term" value="C:extracellular region"/>
    <property type="evidence" value="ECO:0007669"/>
    <property type="project" value="UniProtKB-SubCell"/>
</dbReference>
<dbReference type="GO" id="GO:0005509">
    <property type="term" value="F:calcium ion binding"/>
    <property type="evidence" value="ECO:0000318"/>
    <property type="project" value="GO_Central"/>
</dbReference>
<dbReference type="GO" id="GO:0008289">
    <property type="term" value="F:lipid binding"/>
    <property type="evidence" value="ECO:0000318"/>
    <property type="project" value="GO_Central"/>
</dbReference>
<dbReference type="GO" id="GO:0004623">
    <property type="term" value="F:phospholipase A2 activity"/>
    <property type="evidence" value="ECO:0000318"/>
    <property type="project" value="GO_Central"/>
</dbReference>
<dbReference type="GO" id="GO:0050482">
    <property type="term" value="P:arachidonate secretion"/>
    <property type="evidence" value="ECO:0007669"/>
    <property type="project" value="InterPro"/>
</dbReference>
<dbReference type="GO" id="GO:0016042">
    <property type="term" value="P:lipid catabolic process"/>
    <property type="evidence" value="ECO:0007669"/>
    <property type="project" value="UniProtKB-KW"/>
</dbReference>
<dbReference type="GO" id="GO:0006644">
    <property type="term" value="P:phospholipid metabolic process"/>
    <property type="evidence" value="ECO:0007669"/>
    <property type="project" value="InterPro"/>
</dbReference>
<dbReference type="GO" id="GO:0009555">
    <property type="term" value="P:pollen development"/>
    <property type="evidence" value="ECO:0000318"/>
    <property type="project" value="GO_Central"/>
</dbReference>
<dbReference type="GO" id="GO:0009846">
    <property type="term" value="P:pollen germination"/>
    <property type="evidence" value="ECO:0000318"/>
    <property type="project" value="GO_Central"/>
</dbReference>
<dbReference type="GO" id="GO:0009860">
    <property type="term" value="P:pollen tube growth"/>
    <property type="evidence" value="ECO:0000318"/>
    <property type="project" value="GO_Central"/>
</dbReference>
<dbReference type="CDD" id="cd04706">
    <property type="entry name" value="PLA2_plant"/>
    <property type="match status" value="1"/>
</dbReference>
<dbReference type="FunFam" id="1.20.90.10:FF:000005">
    <property type="entry name" value="Secretory phospholipase A2"/>
    <property type="match status" value="1"/>
</dbReference>
<dbReference type="Gene3D" id="1.20.90.10">
    <property type="entry name" value="Phospholipase A2 domain"/>
    <property type="match status" value="1"/>
</dbReference>
<dbReference type="InterPro" id="IPR036444">
    <property type="entry name" value="PLipase_A2_dom_sf"/>
</dbReference>
<dbReference type="InterPro" id="IPR033113">
    <property type="entry name" value="PLipase_A2_His_AS"/>
</dbReference>
<dbReference type="SUPFAM" id="SSF48619">
    <property type="entry name" value="Phospholipase A2, PLA2"/>
    <property type="match status" value="1"/>
</dbReference>
<dbReference type="PROSITE" id="PS00118">
    <property type="entry name" value="PA2_HIS"/>
    <property type="match status" value="1"/>
</dbReference>
<name>PLA21_ORYSJ</name>